<organism>
    <name type="scientific">Gallus gallus</name>
    <name type="common">Chicken</name>
    <dbReference type="NCBI Taxonomy" id="9031"/>
    <lineage>
        <taxon>Eukaryota</taxon>
        <taxon>Metazoa</taxon>
        <taxon>Chordata</taxon>
        <taxon>Craniata</taxon>
        <taxon>Vertebrata</taxon>
        <taxon>Euteleostomi</taxon>
        <taxon>Archelosauria</taxon>
        <taxon>Archosauria</taxon>
        <taxon>Dinosauria</taxon>
        <taxon>Saurischia</taxon>
        <taxon>Theropoda</taxon>
        <taxon>Coelurosauria</taxon>
        <taxon>Aves</taxon>
        <taxon>Neognathae</taxon>
        <taxon>Galloanserae</taxon>
        <taxon>Galliformes</taxon>
        <taxon>Phasianidae</taxon>
        <taxon>Phasianinae</taxon>
        <taxon>Gallus</taxon>
    </lineage>
</organism>
<proteinExistence type="evidence at transcript level"/>
<keyword id="KW-0325">Glycoprotein</keyword>
<keyword id="KW-0333">Golgi apparatus</keyword>
<keyword id="KW-0472">Membrane</keyword>
<keyword id="KW-1185">Reference proteome</keyword>
<keyword id="KW-0812">Transmembrane</keyword>
<keyword id="KW-1133">Transmembrane helix</keyword>
<accession>Q5ZJE4</accession>
<evidence type="ECO:0000250" key="1">
    <source>
        <dbReference type="UniProtKB" id="Q9H741"/>
    </source>
</evidence>
<evidence type="ECO:0000255" key="2"/>
<evidence type="ECO:0000305" key="3"/>
<comment type="function">
    <text evidence="1">Positively regulates hepatic SREBP signaling pathway by modulating the proper localization of SCAP (SREBP cleavage-activating protein) to the endoplasmic reticulum, thereby controlling the level of functional SCAP.</text>
</comment>
<comment type="subcellular location">
    <subcellularLocation>
        <location evidence="1">Golgi apparatus membrane</location>
        <topology evidence="2">Single-pass membrane protein</topology>
    </subcellularLocation>
</comment>
<comment type="similarity">
    <text evidence="3">Belongs to the SPRING family.</text>
</comment>
<feature type="chain" id="PRO_0000294331" description="SREBP regulating gene protein">
    <location>
        <begin position="1"/>
        <end position="205"/>
    </location>
</feature>
<feature type="topological domain" description="Cytoplasmic" evidence="1">
    <location>
        <begin position="1"/>
        <end position="16"/>
    </location>
</feature>
<feature type="transmembrane region" description="Helical" evidence="2">
    <location>
        <begin position="17"/>
        <end position="35"/>
    </location>
</feature>
<feature type="topological domain" description="Lumenal" evidence="1">
    <location>
        <begin position="36"/>
        <end position="205"/>
    </location>
</feature>
<feature type="glycosylation site" description="N-linked (GlcNAc...) asparagine" evidence="2">
    <location>
        <position position="67"/>
    </location>
</feature>
<protein>
    <recommendedName>
        <fullName evidence="1">SREBP regulating gene protein</fullName>
    </recommendedName>
</protein>
<name>SPRNG_CHICK</name>
<dbReference type="EMBL" id="AJ720490">
    <property type="protein sequence ID" value="CAG32149.1"/>
    <property type="molecule type" value="mRNA"/>
</dbReference>
<dbReference type="RefSeq" id="NP_001007842.1">
    <property type="nucleotide sequence ID" value="NM_001007841.1"/>
</dbReference>
<dbReference type="SMR" id="Q5ZJE4"/>
<dbReference type="FunCoup" id="Q5ZJE4">
    <property type="interactions" value="1420"/>
</dbReference>
<dbReference type="STRING" id="9031.ENSGALP00000043905"/>
<dbReference type="GlyCosmos" id="Q5ZJE4">
    <property type="glycosylation" value="1 site, No reported glycans"/>
</dbReference>
<dbReference type="GlyGen" id="Q5ZJE4">
    <property type="glycosylation" value="1 site"/>
</dbReference>
<dbReference type="PaxDb" id="9031-ENSGALP00000013364"/>
<dbReference type="Ensembl" id="ENSGALT00010001000.1">
    <property type="protein sequence ID" value="ENSGALP00010000528.1"/>
    <property type="gene ID" value="ENSGALG00010000479.1"/>
</dbReference>
<dbReference type="GeneID" id="417026"/>
<dbReference type="KEGG" id="gga:417026"/>
<dbReference type="CTD" id="417026"/>
<dbReference type="VEuPathDB" id="HostDB:geneid_417026"/>
<dbReference type="eggNOG" id="KOG3136">
    <property type="taxonomic scope" value="Eukaryota"/>
</dbReference>
<dbReference type="GeneTree" id="ENSGT00390000008031"/>
<dbReference type="HOGENOM" id="CLU_079455_0_0_1"/>
<dbReference type="InParanoid" id="Q5ZJE4"/>
<dbReference type="OMA" id="CNTTSHC"/>
<dbReference type="OrthoDB" id="70142at2759"/>
<dbReference type="PhylomeDB" id="Q5ZJE4"/>
<dbReference type="TreeFam" id="TF323884"/>
<dbReference type="PRO" id="PR:Q5ZJE4"/>
<dbReference type="Proteomes" id="UP000000539">
    <property type="component" value="Chromosome 15"/>
</dbReference>
<dbReference type="Bgee" id="ENSGALG00000031821">
    <property type="expression patterns" value="Expressed in cerebellum and 13 other cell types or tissues"/>
</dbReference>
<dbReference type="GO" id="GO:0000139">
    <property type="term" value="C:Golgi membrane"/>
    <property type="evidence" value="ECO:0000250"/>
    <property type="project" value="UniProtKB"/>
</dbReference>
<dbReference type="GO" id="GO:2000640">
    <property type="term" value="P:positive regulation of SREBP signaling pathway"/>
    <property type="evidence" value="ECO:0000250"/>
    <property type="project" value="UniProtKB"/>
</dbReference>
<dbReference type="InterPro" id="IPR019352">
    <property type="entry name" value="SPRING1"/>
</dbReference>
<dbReference type="PANTHER" id="PTHR13481">
    <property type="entry name" value="SREBP REGULATING GENE PROTEIN"/>
    <property type="match status" value="1"/>
</dbReference>
<dbReference type="PANTHER" id="PTHR13481:SF0">
    <property type="entry name" value="SREBP REGULATING GENE PROTEIN"/>
    <property type="match status" value="1"/>
</dbReference>
<dbReference type="Pfam" id="PF10218">
    <property type="entry name" value="SPRING1"/>
    <property type="match status" value="1"/>
</dbReference>
<gene>
    <name evidence="1" type="primary">SPRING</name>
</gene>
<gene>
    <name type="ORF">RCJMB04_18o22</name>
</gene>
<reference key="1">
    <citation type="journal article" date="2005" name="Genome Biol.">
        <title>Full-length cDNAs from chicken bursal lymphocytes to facilitate gene function analysis.</title>
        <authorList>
            <person name="Caldwell R.B."/>
            <person name="Kierzek A.M."/>
            <person name="Arakawa H."/>
            <person name="Bezzubov Y."/>
            <person name="Zaim J."/>
            <person name="Fiedler P."/>
            <person name="Kutter S."/>
            <person name="Blagodatski A."/>
            <person name="Kostovska D."/>
            <person name="Koter M."/>
            <person name="Plachy J."/>
            <person name="Carninci P."/>
            <person name="Hayashizaki Y."/>
            <person name="Buerstedde J.-M."/>
        </authorList>
    </citation>
    <scope>NUCLEOTIDE SEQUENCE [LARGE SCALE MRNA]</scope>
    <source>
        <strain>CB</strain>
        <tissue>Bursa of Fabricius</tissue>
    </source>
</reference>
<sequence>MVPCGAVLWRRLLRKRWVLGVVFGLSLVYFLSSTFKQEERTVRDRNLLQVQEHEQPILWKEQFSSGNGSHLSNQCRNSVQGKLLITDELGYICERKDLLVNGCCNVNVPSTKLYSCDSCLPNGCCSVYEYCVSCCLQPSKQHLLERFLNRAAMAFQNLFMAVEDRFELCLAKCRTSSQSVQHENTYRDPIAKYCYGEYPPELLPV</sequence>